<sequence length="371" mass="43308">MEAVMSPMMTCVHKIMCRVDQYGNIDSYDAALNVMRKRNIQITPKESVQFKSFLRMLNMADLCFEVKEEEPCCICFRKDVIYKEVPCGHYICVECYKEPIRNVCPECNAPWPERANDPTVKQYTEEQYAHTLGGYYVTRADGTNYRSQEEYLADLDNIYREVEEADQRDNDPIESDIEEEMNESEAEEEEPVPEIAQFEALNTPPPPPTNRRPKIRRPMERARNTTRYDSEELTNMLMTEVATRVSLRGGVGDLNWITQIKNDIRKIQAASYRSRNDNMMIKYFAYLVAIIMPNECEAQRREILKLHAFRCHKRNARDCCGTCGMDMCNQRTYSIREIPNNNGSRLITVCGRCNQINNVNNTAFRLLYNYM</sequence>
<feature type="chain" id="PRO_0000385034" description="Putative RING finger protein ORF117">
    <location>
        <begin position="1"/>
        <end position="371"/>
    </location>
</feature>
<feature type="zinc finger region" description="RING-type" evidence="1">
    <location>
        <begin position="72"/>
        <end position="108"/>
    </location>
</feature>
<feature type="region of interest" description="Disordered" evidence="2">
    <location>
        <begin position="178"/>
        <end position="218"/>
    </location>
</feature>
<feature type="compositionally biased region" description="Acidic residues" evidence="2">
    <location>
        <begin position="178"/>
        <end position="192"/>
    </location>
</feature>
<organismHost>
    <name type="scientific">Magallana gigas</name>
    <name type="common">Pacific oyster</name>
    <name type="synonym">Crassostrea gigas</name>
    <dbReference type="NCBI Taxonomy" id="29159"/>
</organismHost>
<organismHost>
    <name type="scientific">Pecten maximus</name>
    <name type="common">King scallop</name>
    <name type="synonym">Pilgrim's clam</name>
    <dbReference type="NCBI Taxonomy" id="6579"/>
</organismHost>
<proteinExistence type="predicted"/>
<protein>
    <recommendedName>
        <fullName>Putative RING finger protein ORF117</fullName>
    </recommendedName>
</protein>
<gene>
    <name type="ORF">ORF117</name>
</gene>
<name>Y117_OSHVF</name>
<dbReference type="EMBL" id="AY509253">
    <property type="protein sequence ID" value="AAS01006.1"/>
    <property type="molecule type" value="Genomic_DNA"/>
</dbReference>
<dbReference type="EMBL" id="AY509253">
    <property type="protein sequence ID" value="AAS01019.1"/>
    <property type="molecule type" value="Genomic_DNA"/>
</dbReference>
<dbReference type="RefSeq" id="YP_024659.1">
    <property type="nucleotide sequence ID" value="NC_005881.2"/>
</dbReference>
<dbReference type="RefSeq" id="YP_024672.1">
    <property type="nucleotide sequence ID" value="NC_005881.2"/>
</dbReference>
<dbReference type="KEGG" id="vg:2948145"/>
<dbReference type="KEGG" id="vg:2948226"/>
<dbReference type="Proteomes" id="UP000007021">
    <property type="component" value="Segment"/>
</dbReference>
<dbReference type="GO" id="GO:0008270">
    <property type="term" value="F:zinc ion binding"/>
    <property type="evidence" value="ECO:0007669"/>
    <property type="project" value="UniProtKB-KW"/>
</dbReference>
<dbReference type="Gene3D" id="3.30.40.10">
    <property type="entry name" value="Zinc/RING finger domain, C3HC4 (zinc finger)"/>
    <property type="match status" value="1"/>
</dbReference>
<dbReference type="InterPro" id="IPR001841">
    <property type="entry name" value="Znf_RING"/>
</dbReference>
<dbReference type="InterPro" id="IPR013083">
    <property type="entry name" value="Znf_RING/FYVE/PHD"/>
</dbReference>
<dbReference type="InterPro" id="IPR017907">
    <property type="entry name" value="Znf_RING_CS"/>
</dbReference>
<dbReference type="SUPFAM" id="SSF57850">
    <property type="entry name" value="RING/U-box"/>
    <property type="match status" value="1"/>
</dbReference>
<dbReference type="PROSITE" id="PS00518">
    <property type="entry name" value="ZF_RING_1"/>
    <property type="match status" value="1"/>
</dbReference>
<dbReference type="PROSITE" id="PS50089">
    <property type="entry name" value="ZF_RING_2"/>
    <property type="match status" value="1"/>
</dbReference>
<accession>Q6R796</accession>
<keyword id="KW-0479">Metal-binding</keyword>
<keyword id="KW-1185">Reference proteome</keyword>
<keyword id="KW-0862">Zinc</keyword>
<keyword id="KW-0863">Zinc-finger</keyword>
<evidence type="ECO:0000255" key="1">
    <source>
        <dbReference type="PROSITE-ProRule" id="PRU00175"/>
    </source>
</evidence>
<evidence type="ECO:0000256" key="2">
    <source>
        <dbReference type="SAM" id="MobiDB-lite"/>
    </source>
</evidence>
<reference key="1">
    <citation type="journal article" date="2005" name="J. Gen. Virol.">
        <title>A novel class of herpesvirus with bivalve hosts.</title>
        <authorList>
            <person name="Davison A.J."/>
            <person name="Trus B.L."/>
            <person name="Cheng N."/>
            <person name="Steven A.C."/>
            <person name="Watson M.S."/>
            <person name="Cunningham C."/>
            <person name="Le Deuff R.M."/>
            <person name="Renault T."/>
        </authorList>
    </citation>
    <scope>NUCLEOTIDE SEQUENCE [LARGE SCALE GENOMIC DNA]</scope>
</reference>
<organism>
    <name type="scientific">Ostreid herpesvirus 1 (isolate France)</name>
    <name type="common">OsHV-1</name>
    <name type="synonym">Pacific oyster herpesvirus</name>
    <dbReference type="NCBI Taxonomy" id="654903"/>
    <lineage>
        <taxon>Viruses</taxon>
        <taxon>Duplodnaviria</taxon>
        <taxon>Heunggongvirae</taxon>
        <taxon>Peploviricota</taxon>
        <taxon>Herviviricetes</taxon>
        <taxon>Herpesvirales</taxon>
        <taxon>Malacoherpesviridae</taxon>
        <taxon>Ostreavirus</taxon>
        <taxon>Ostreavirus ostreidmalaco1</taxon>
        <taxon>Ostreid herpesvirus 1</taxon>
    </lineage>
</organism>